<reference key="1">
    <citation type="journal article" date="2009" name="J. Bacteriol.">
        <title>Genome sequence of Azotobacter vinelandii, an obligate aerobe specialized to support diverse anaerobic metabolic processes.</title>
        <authorList>
            <person name="Setubal J.C."/>
            <person name="Dos Santos P."/>
            <person name="Goldman B.S."/>
            <person name="Ertesvaag H."/>
            <person name="Espin G."/>
            <person name="Rubio L.M."/>
            <person name="Valla S."/>
            <person name="Almeida N.F."/>
            <person name="Balasubramanian D."/>
            <person name="Cromes L."/>
            <person name="Curatti L."/>
            <person name="Du Z."/>
            <person name="Godsy E."/>
            <person name="Goodner B."/>
            <person name="Hellner-Burris K."/>
            <person name="Hernandez J.A."/>
            <person name="Houmiel K."/>
            <person name="Imperial J."/>
            <person name="Kennedy C."/>
            <person name="Larson T.J."/>
            <person name="Latreille P."/>
            <person name="Ligon L.S."/>
            <person name="Lu J."/>
            <person name="Maerk M."/>
            <person name="Miller N.M."/>
            <person name="Norton S."/>
            <person name="O'Carroll I.P."/>
            <person name="Paulsen I."/>
            <person name="Raulfs E.C."/>
            <person name="Roemer R."/>
            <person name="Rosser J."/>
            <person name="Segura D."/>
            <person name="Slater S."/>
            <person name="Stricklin S.L."/>
            <person name="Studholme D.J."/>
            <person name="Sun J."/>
            <person name="Viana C.J."/>
            <person name="Wallin E."/>
            <person name="Wang B."/>
            <person name="Wheeler C."/>
            <person name="Zhu H."/>
            <person name="Dean D.R."/>
            <person name="Dixon R."/>
            <person name="Wood D."/>
        </authorList>
    </citation>
    <scope>NUCLEOTIDE SEQUENCE [LARGE SCALE GENOMIC DNA]</scope>
    <source>
        <strain>DJ / ATCC BAA-1303</strain>
    </source>
</reference>
<accession>C1DRL5</accession>
<proteinExistence type="inferred from homology"/>
<feature type="chain" id="PRO_1000213022" description="Thiopurine S-methyltransferase">
    <location>
        <begin position="1"/>
        <end position="218"/>
    </location>
</feature>
<feature type="binding site" evidence="1">
    <location>
        <position position="10"/>
    </location>
    <ligand>
        <name>S-adenosyl-L-methionine</name>
        <dbReference type="ChEBI" id="CHEBI:59789"/>
    </ligand>
</feature>
<feature type="binding site" evidence="1">
    <location>
        <position position="45"/>
    </location>
    <ligand>
        <name>S-adenosyl-L-methionine</name>
        <dbReference type="ChEBI" id="CHEBI:59789"/>
    </ligand>
</feature>
<feature type="binding site" evidence="1">
    <location>
        <position position="66"/>
    </location>
    <ligand>
        <name>S-adenosyl-L-methionine</name>
        <dbReference type="ChEBI" id="CHEBI:59789"/>
    </ligand>
</feature>
<feature type="binding site" evidence="1">
    <location>
        <position position="123"/>
    </location>
    <ligand>
        <name>S-adenosyl-L-methionine</name>
        <dbReference type="ChEBI" id="CHEBI:59789"/>
    </ligand>
</feature>
<sequence length="218" mass="24925">MHEDFWQARWARDEIGFHQAQVNPYLSRHWPTLGLAPGSRVLVPLCGKSLDLAWLAGQGFAVLGVELAEKAVRDFFDEQRLIPQVDSQGVFRVYRVGSLEIRCGDFFALSAADVADCRGLYDRAALIALPTEMRERYAAHLSAILPSGCRGLLVCLDYDQTRMGGPPFAVDDHEVRRLLGTDWQVRLLEAPDVLRENWKFLQRGLDRLEERVYRLERR</sequence>
<evidence type="ECO:0000255" key="1">
    <source>
        <dbReference type="HAMAP-Rule" id="MF_00812"/>
    </source>
</evidence>
<comment type="catalytic activity">
    <reaction evidence="1">
        <text>S-adenosyl-L-methionine + a thiopurine = S-adenosyl-L-homocysteine + a thiopurine S-methylether.</text>
        <dbReference type="EC" id="2.1.1.67"/>
    </reaction>
</comment>
<comment type="subcellular location">
    <subcellularLocation>
        <location evidence="1">Cytoplasm</location>
    </subcellularLocation>
</comment>
<comment type="similarity">
    <text evidence="1">Belongs to the class I-like SAM-binding methyltransferase superfamily. TPMT family.</text>
</comment>
<protein>
    <recommendedName>
        <fullName evidence="1">Thiopurine S-methyltransferase</fullName>
        <ecNumber evidence="1">2.1.1.67</ecNumber>
    </recommendedName>
    <alternativeName>
        <fullName evidence="1">Thiopurine methyltransferase</fullName>
    </alternativeName>
</protein>
<dbReference type="EC" id="2.1.1.67" evidence="1"/>
<dbReference type="EMBL" id="CP001157">
    <property type="protein sequence ID" value="ACO77753.1"/>
    <property type="molecule type" value="Genomic_DNA"/>
</dbReference>
<dbReference type="RefSeq" id="WP_012700169.1">
    <property type="nucleotide sequence ID" value="NC_012560.1"/>
</dbReference>
<dbReference type="SMR" id="C1DRL5"/>
<dbReference type="STRING" id="322710.Avin_15380"/>
<dbReference type="EnsemblBacteria" id="ACO77753">
    <property type="protein sequence ID" value="ACO77753"/>
    <property type="gene ID" value="Avin_15380"/>
</dbReference>
<dbReference type="GeneID" id="88184829"/>
<dbReference type="KEGG" id="avn:Avin_15380"/>
<dbReference type="eggNOG" id="COG0500">
    <property type="taxonomic scope" value="Bacteria"/>
</dbReference>
<dbReference type="HOGENOM" id="CLU_085515_1_0_6"/>
<dbReference type="OrthoDB" id="9778208at2"/>
<dbReference type="Proteomes" id="UP000002424">
    <property type="component" value="Chromosome"/>
</dbReference>
<dbReference type="GO" id="GO:0005737">
    <property type="term" value="C:cytoplasm"/>
    <property type="evidence" value="ECO:0007669"/>
    <property type="project" value="UniProtKB-SubCell"/>
</dbReference>
<dbReference type="GO" id="GO:0008119">
    <property type="term" value="F:thiopurine S-methyltransferase activity"/>
    <property type="evidence" value="ECO:0007669"/>
    <property type="project" value="UniProtKB-UniRule"/>
</dbReference>
<dbReference type="GO" id="GO:0032259">
    <property type="term" value="P:methylation"/>
    <property type="evidence" value="ECO:0007669"/>
    <property type="project" value="UniProtKB-KW"/>
</dbReference>
<dbReference type="GO" id="GO:0010038">
    <property type="term" value="P:response to metal ion"/>
    <property type="evidence" value="ECO:0007669"/>
    <property type="project" value="InterPro"/>
</dbReference>
<dbReference type="FunFam" id="3.40.50.150:FF:000101">
    <property type="entry name" value="Thiopurine S-methyltransferase"/>
    <property type="match status" value="1"/>
</dbReference>
<dbReference type="Gene3D" id="3.40.50.150">
    <property type="entry name" value="Vaccinia Virus protein VP39"/>
    <property type="match status" value="1"/>
</dbReference>
<dbReference type="HAMAP" id="MF_00812">
    <property type="entry name" value="Thiopur_methtran"/>
    <property type="match status" value="1"/>
</dbReference>
<dbReference type="InterPro" id="IPR029063">
    <property type="entry name" value="SAM-dependent_MTases_sf"/>
</dbReference>
<dbReference type="InterPro" id="IPR022474">
    <property type="entry name" value="Thiopur_S-MeTfrase_Se/Te_detox"/>
</dbReference>
<dbReference type="InterPro" id="IPR025835">
    <property type="entry name" value="Thiopurine_S-MeTrfase"/>
</dbReference>
<dbReference type="InterPro" id="IPR008854">
    <property type="entry name" value="TPMT"/>
</dbReference>
<dbReference type="NCBIfam" id="NF009732">
    <property type="entry name" value="PRK13255.1"/>
    <property type="match status" value="1"/>
</dbReference>
<dbReference type="NCBIfam" id="TIGR03840">
    <property type="entry name" value="TMPT_Se_Te"/>
    <property type="match status" value="1"/>
</dbReference>
<dbReference type="PANTHER" id="PTHR10259">
    <property type="entry name" value="THIOPURINE S-METHYLTRANSFERASE"/>
    <property type="match status" value="1"/>
</dbReference>
<dbReference type="PANTHER" id="PTHR10259:SF11">
    <property type="entry name" value="THIOPURINE S-METHYLTRANSFERASE"/>
    <property type="match status" value="1"/>
</dbReference>
<dbReference type="Pfam" id="PF05724">
    <property type="entry name" value="TPMT"/>
    <property type="match status" value="1"/>
</dbReference>
<dbReference type="PIRSF" id="PIRSF023956">
    <property type="entry name" value="Thiopurine_S-methyltransferase"/>
    <property type="match status" value="1"/>
</dbReference>
<dbReference type="SUPFAM" id="SSF53335">
    <property type="entry name" value="S-adenosyl-L-methionine-dependent methyltransferases"/>
    <property type="match status" value="1"/>
</dbReference>
<dbReference type="PROSITE" id="PS51585">
    <property type="entry name" value="SAM_MT_TPMT"/>
    <property type="match status" value="1"/>
</dbReference>
<name>TPMT_AZOVD</name>
<keyword id="KW-0963">Cytoplasm</keyword>
<keyword id="KW-0489">Methyltransferase</keyword>
<keyword id="KW-0949">S-adenosyl-L-methionine</keyword>
<keyword id="KW-0808">Transferase</keyword>
<organism>
    <name type="scientific">Azotobacter vinelandii (strain DJ / ATCC BAA-1303)</name>
    <dbReference type="NCBI Taxonomy" id="322710"/>
    <lineage>
        <taxon>Bacteria</taxon>
        <taxon>Pseudomonadati</taxon>
        <taxon>Pseudomonadota</taxon>
        <taxon>Gammaproteobacteria</taxon>
        <taxon>Pseudomonadales</taxon>
        <taxon>Pseudomonadaceae</taxon>
        <taxon>Azotobacter</taxon>
    </lineage>
</organism>
<gene>
    <name evidence="1" type="primary">tpm</name>
    <name type="ordered locus">Avin_15380</name>
</gene>